<accession>Q034Z0</accession>
<protein>
    <recommendedName>
        <fullName evidence="1">Large ribosomal subunit protein uL16</fullName>
    </recommendedName>
    <alternativeName>
        <fullName evidence="2">50S ribosomal protein L16</fullName>
    </alternativeName>
</protein>
<feature type="chain" id="PRO_1000054639" description="Large ribosomal subunit protein uL16">
    <location>
        <begin position="1"/>
        <end position="144"/>
    </location>
</feature>
<comment type="function">
    <text evidence="1">Binds 23S rRNA and is also seen to make contacts with the A and possibly P site tRNAs.</text>
</comment>
<comment type="subunit">
    <text evidence="1">Part of the 50S ribosomal subunit.</text>
</comment>
<comment type="similarity">
    <text evidence="1">Belongs to the universal ribosomal protein uL16 family.</text>
</comment>
<keyword id="KW-1185">Reference proteome</keyword>
<keyword id="KW-0687">Ribonucleoprotein</keyword>
<keyword id="KW-0689">Ribosomal protein</keyword>
<keyword id="KW-0694">RNA-binding</keyword>
<keyword id="KW-0699">rRNA-binding</keyword>
<keyword id="KW-0820">tRNA-binding</keyword>
<reference key="1">
    <citation type="journal article" date="2006" name="Proc. Natl. Acad. Sci. U.S.A.">
        <title>Comparative genomics of the lactic acid bacteria.</title>
        <authorList>
            <person name="Makarova K.S."/>
            <person name="Slesarev A."/>
            <person name="Wolf Y.I."/>
            <person name="Sorokin A."/>
            <person name="Mirkin B."/>
            <person name="Koonin E.V."/>
            <person name="Pavlov A."/>
            <person name="Pavlova N."/>
            <person name="Karamychev V."/>
            <person name="Polouchine N."/>
            <person name="Shakhova V."/>
            <person name="Grigoriev I."/>
            <person name="Lou Y."/>
            <person name="Rohksar D."/>
            <person name="Lucas S."/>
            <person name="Huang K."/>
            <person name="Goodstein D.M."/>
            <person name="Hawkins T."/>
            <person name="Plengvidhya V."/>
            <person name="Welker D."/>
            <person name="Hughes J."/>
            <person name="Goh Y."/>
            <person name="Benson A."/>
            <person name="Baldwin K."/>
            <person name="Lee J.-H."/>
            <person name="Diaz-Muniz I."/>
            <person name="Dosti B."/>
            <person name="Smeianov V."/>
            <person name="Wechter W."/>
            <person name="Barabote R."/>
            <person name="Lorca G."/>
            <person name="Altermann E."/>
            <person name="Barrangou R."/>
            <person name="Ganesan B."/>
            <person name="Xie Y."/>
            <person name="Rawsthorne H."/>
            <person name="Tamir D."/>
            <person name="Parker C."/>
            <person name="Breidt F."/>
            <person name="Broadbent J.R."/>
            <person name="Hutkins R."/>
            <person name="O'Sullivan D."/>
            <person name="Steele J."/>
            <person name="Unlu G."/>
            <person name="Saier M.H. Jr."/>
            <person name="Klaenhammer T."/>
            <person name="Richardson P."/>
            <person name="Kozyavkin S."/>
            <person name="Weimer B.C."/>
            <person name="Mills D.A."/>
        </authorList>
    </citation>
    <scope>NUCLEOTIDE SEQUENCE [LARGE SCALE GENOMIC DNA]</scope>
    <source>
        <strain>ATCC 334 / BCRC 17002 / CCUG 31169 / CIP 107868 / KCTC 3260 / NRRL B-441</strain>
    </source>
</reference>
<name>RL16_LACP3</name>
<proteinExistence type="inferred from homology"/>
<evidence type="ECO:0000255" key="1">
    <source>
        <dbReference type="HAMAP-Rule" id="MF_01342"/>
    </source>
</evidence>
<evidence type="ECO:0000305" key="2"/>
<dbReference type="EMBL" id="CP000423">
    <property type="protein sequence ID" value="ABJ71232.1"/>
    <property type="molecule type" value="Genomic_DNA"/>
</dbReference>
<dbReference type="RefSeq" id="WP_003567551.1">
    <property type="nucleotide sequence ID" value="NC_008526.1"/>
</dbReference>
<dbReference type="RefSeq" id="YP_807674.1">
    <property type="nucleotide sequence ID" value="NC_008526.1"/>
</dbReference>
<dbReference type="SMR" id="Q034Z0"/>
<dbReference type="STRING" id="321967.LSEI_2496"/>
<dbReference type="PaxDb" id="321967-LSEI_2496"/>
<dbReference type="GeneID" id="57091075"/>
<dbReference type="KEGG" id="lca:LSEI_2496"/>
<dbReference type="PATRIC" id="fig|321967.11.peg.2450"/>
<dbReference type="HOGENOM" id="CLU_078858_2_1_9"/>
<dbReference type="Proteomes" id="UP000001651">
    <property type="component" value="Chromosome"/>
</dbReference>
<dbReference type="GO" id="GO:0022625">
    <property type="term" value="C:cytosolic large ribosomal subunit"/>
    <property type="evidence" value="ECO:0007669"/>
    <property type="project" value="TreeGrafter"/>
</dbReference>
<dbReference type="GO" id="GO:0019843">
    <property type="term" value="F:rRNA binding"/>
    <property type="evidence" value="ECO:0007669"/>
    <property type="project" value="UniProtKB-UniRule"/>
</dbReference>
<dbReference type="GO" id="GO:0003735">
    <property type="term" value="F:structural constituent of ribosome"/>
    <property type="evidence" value="ECO:0007669"/>
    <property type="project" value="InterPro"/>
</dbReference>
<dbReference type="GO" id="GO:0000049">
    <property type="term" value="F:tRNA binding"/>
    <property type="evidence" value="ECO:0007669"/>
    <property type="project" value="UniProtKB-KW"/>
</dbReference>
<dbReference type="GO" id="GO:0006412">
    <property type="term" value="P:translation"/>
    <property type="evidence" value="ECO:0007669"/>
    <property type="project" value="UniProtKB-UniRule"/>
</dbReference>
<dbReference type="CDD" id="cd01433">
    <property type="entry name" value="Ribosomal_L16_L10e"/>
    <property type="match status" value="1"/>
</dbReference>
<dbReference type="FunFam" id="3.90.1170.10:FF:000001">
    <property type="entry name" value="50S ribosomal protein L16"/>
    <property type="match status" value="1"/>
</dbReference>
<dbReference type="Gene3D" id="3.90.1170.10">
    <property type="entry name" value="Ribosomal protein L10e/L16"/>
    <property type="match status" value="1"/>
</dbReference>
<dbReference type="HAMAP" id="MF_01342">
    <property type="entry name" value="Ribosomal_uL16"/>
    <property type="match status" value="1"/>
</dbReference>
<dbReference type="InterPro" id="IPR047873">
    <property type="entry name" value="Ribosomal_uL16"/>
</dbReference>
<dbReference type="InterPro" id="IPR000114">
    <property type="entry name" value="Ribosomal_uL16_bact-type"/>
</dbReference>
<dbReference type="InterPro" id="IPR020798">
    <property type="entry name" value="Ribosomal_uL16_CS"/>
</dbReference>
<dbReference type="InterPro" id="IPR016180">
    <property type="entry name" value="Ribosomal_uL16_dom"/>
</dbReference>
<dbReference type="InterPro" id="IPR036920">
    <property type="entry name" value="Ribosomal_uL16_sf"/>
</dbReference>
<dbReference type="NCBIfam" id="TIGR01164">
    <property type="entry name" value="rplP_bact"/>
    <property type="match status" value="1"/>
</dbReference>
<dbReference type="PANTHER" id="PTHR12220">
    <property type="entry name" value="50S/60S RIBOSOMAL PROTEIN L16"/>
    <property type="match status" value="1"/>
</dbReference>
<dbReference type="PANTHER" id="PTHR12220:SF13">
    <property type="entry name" value="LARGE RIBOSOMAL SUBUNIT PROTEIN UL16M"/>
    <property type="match status" value="1"/>
</dbReference>
<dbReference type="Pfam" id="PF00252">
    <property type="entry name" value="Ribosomal_L16"/>
    <property type="match status" value="1"/>
</dbReference>
<dbReference type="PRINTS" id="PR00060">
    <property type="entry name" value="RIBOSOMALL16"/>
</dbReference>
<dbReference type="SUPFAM" id="SSF54686">
    <property type="entry name" value="Ribosomal protein L16p/L10e"/>
    <property type="match status" value="1"/>
</dbReference>
<dbReference type="PROSITE" id="PS00586">
    <property type="entry name" value="RIBOSOMAL_L16_1"/>
    <property type="match status" value="1"/>
</dbReference>
<dbReference type="PROSITE" id="PS00701">
    <property type="entry name" value="RIBOSOMAL_L16_2"/>
    <property type="match status" value="1"/>
</dbReference>
<gene>
    <name evidence="1" type="primary">rplP</name>
    <name type="ordered locus">LSEI_2496</name>
</gene>
<organism>
    <name type="scientific">Lacticaseibacillus paracasei (strain ATCC 334 / BCRC 17002 / CCUG 31169 / CIP 107868 / KCTC 3260 / NRRL B-441)</name>
    <name type="common">Lactobacillus paracasei</name>
    <dbReference type="NCBI Taxonomy" id="321967"/>
    <lineage>
        <taxon>Bacteria</taxon>
        <taxon>Bacillati</taxon>
        <taxon>Bacillota</taxon>
        <taxon>Bacilli</taxon>
        <taxon>Lactobacillales</taxon>
        <taxon>Lactobacillaceae</taxon>
        <taxon>Lacticaseibacillus</taxon>
    </lineage>
</organism>
<sequence length="144" mass="16037">MLVPKRVKHRREFRGKMRGAAKGGRNVDFGEYGLEALESHWITNRQIEAARVAMTRYMKRGGKVWIRIFPHKSYTSKGVGVRMGNGKGAPTGWVAVVKREKIMFEVGGVSEAVAKEALRLASNKLPIRTKIVSREEVGGQSNEG</sequence>